<organism>
    <name type="scientific">Escherichia coli (strain UTI89 / UPEC)</name>
    <dbReference type="NCBI Taxonomy" id="364106"/>
    <lineage>
        <taxon>Bacteria</taxon>
        <taxon>Pseudomonadati</taxon>
        <taxon>Pseudomonadota</taxon>
        <taxon>Gammaproteobacteria</taxon>
        <taxon>Enterobacterales</taxon>
        <taxon>Enterobacteriaceae</taxon>
        <taxon>Escherichia</taxon>
    </lineage>
</organism>
<reference key="1">
    <citation type="journal article" date="2006" name="Proc. Natl. Acad. Sci. U.S.A.">
        <title>Identification of genes subject to positive selection in uropathogenic strains of Escherichia coli: a comparative genomics approach.</title>
        <authorList>
            <person name="Chen S.L."/>
            <person name="Hung C.-S."/>
            <person name="Xu J."/>
            <person name="Reigstad C.S."/>
            <person name="Magrini V."/>
            <person name="Sabo A."/>
            <person name="Blasiar D."/>
            <person name="Bieri T."/>
            <person name="Meyer R.R."/>
            <person name="Ozersky P."/>
            <person name="Armstrong J.R."/>
            <person name="Fulton R.S."/>
            <person name="Latreille J.P."/>
            <person name="Spieth J."/>
            <person name="Hooton T.M."/>
            <person name="Mardis E.R."/>
            <person name="Hultgren S.J."/>
            <person name="Gordon J.I."/>
        </authorList>
    </citation>
    <scope>NUCLEOTIDE SEQUENCE [LARGE SCALE GENOMIC DNA]</scope>
    <source>
        <strain>UTI89 / UPEC</strain>
    </source>
</reference>
<gene>
    <name evidence="1" type="primary">queA</name>
    <name type="ordered locus">UTI89_C0427</name>
</gene>
<evidence type="ECO:0000255" key="1">
    <source>
        <dbReference type="HAMAP-Rule" id="MF_00113"/>
    </source>
</evidence>
<feature type="chain" id="PRO_1000015211" description="S-adenosylmethionine:tRNA ribosyltransferase-isomerase">
    <location>
        <begin position="1"/>
        <end position="356"/>
    </location>
</feature>
<keyword id="KW-0963">Cytoplasm</keyword>
<keyword id="KW-0671">Queuosine biosynthesis</keyword>
<keyword id="KW-0949">S-adenosyl-L-methionine</keyword>
<keyword id="KW-0808">Transferase</keyword>
<sequence length="356" mass="39413">MRVTDFSFELPESLIAHYPMPERSSCRLLSLDGPTGALTHGTFTDLLDKLNPGDLLVFNNTRVIPARLFGRKASGGKIEVLVERMLDEKRILAHIRASKAPKPGAELLLGDDESINATMTARHGALFEVEFNDDRSVLDILNSIGHIPLPPYIDRPDEDADRELYQTVYSEKPGAVAAPTAGLHFDEPLLEKLRAKGVEMAFVTLHVGAGTFQPVRVDTIEDHIMHSEYAEVPQDVVDAVLAAKARGNRVIAVGTTSVRSLESAAQAAKNDLIEPFFDDTQIFIYPGFQYKVVDALVTNFHLPESTLIMLVSAFAGYQHTMNAYKAAVEEKYRFFSYGDAMFITYNPQAINERVGE</sequence>
<dbReference type="EC" id="2.4.99.17" evidence="1"/>
<dbReference type="EMBL" id="CP000243">
    <property type="protein sequence ID" value="ABE05928.1"/>
    <property type="molecule type" value="Genomic_DNA"/>
</dbReference>
<dbReference type="RefSeq" id="WP_001266511.1">
    <property type="nucleotide sequence ID" value="NZ_CP064825.1"/>
</dbReference>
<dbReference type="SMR" id="Q1RFD6"/>
<dbReference type="KEGG" id="eci:UTI89_C0427"/>
<dbReference type="HOGENOM" id="CLU_039110_1_0_6"/>
<dbReference type="UniPathway" id="UPA00392"/>
<dbReference type="Proteomes" id="UP000001952">
    <property type="component" value="Chromosome"/>
</dbReference>
<dbReference type="GO" id="GO:0005737">
    <property type="term" value="C:cytoplasm"/>
    <property type="evidence" value="ECO:0007669"/>
    <property type="project" value="UniProtKB-SubCell"/>
</dbReference>
<dbReference type="GO" id="GO:0051075">
    <property type="term" value="F:S-adenosylmethionine:tRNA ribosyltransferase-isomerase activity"/>
    <property type="evidence" value="ECO:0007669"/>
    <property type="project" value="UniProtKB-EC"/>
</dbReference>
<dbReference type="GO" id="GO:0008616">
    <property type="term" value="P:queuosine biosynthetic process"/>
    <property type="evidence" value="ECO:0007669"/>
    <property type="project" value="UniProtKB-UniRule"/>
</dbReference>
<dbReference type="GO" id="GO:0002099">
    <property type="term" value="P:tRNA wobble guanine modification"/>
    <property type="evidence" value="ECO:0007669"/>
    <property type="project" value="TreeGrafter"/>
</dbReference>
<dbReference type="FunFam" id="2.40.10.240:FF:000001">
    <property type="entry name" value="S-adenosylmethionine:tRNA ribosyltransferase-isomerase"/>
    <property type="match status" value="1"/>
</dbReference>
<dbReference type="FunFam" id="3.40.1780.10:FF:000001">
    <property type="entry name" value="S-adenosylmethionine:tRNA ribosyltransferase-isomerase"/>
    <property type="match status" value="1"/>
</dbReference>
<dbReference type="Gene3D" id="2.40.10.240">
    <property type="entry name" value="QueA-like"/>
    <property type="match status" value="1"/>
</dbReference>
<dbReference type="Gene3D" id="3.40.1780.10">
    <property type="entry name" value="QueA-like"/>
    <property type="match status" value="1"/>
</dbReference>
<dbReference type="HAMAP" id="MF_00113">
    <property type="entry name" value="QueA"/>
    <property type="match status" value="1"/>
</dbReference>
<dbReference type="InterPro" id="IPR003699">
    <property type="entry name" value="QueA"/>
</dbReference>
<dbReference type="InterPro" id="IPR042118">
    <property type="entry name" value="QueA_dom1"/>
</dbReference>
<dbReference type="InterPro" id="IPR042119">
    <property type="entry name" value="QueA_dom2"/>
</dbReference>
<dbReference type="InterPro" id="IPR036100">
    <property type="entry name" value="QueA_sf"/>
</dbReference>
<dbReference type="NCBIfam" id="NF001140">
    <property type="entry name" value="PRK00147.1"/>
    <property type="match status" value="1"/>
</dbReference>
<dbReference type="NCBIfam" id="TIGR00113">
    <property type="entry name" value="queA"/>
    <property type="match status" value="1"/>
</dbReference>
<dbReference type="PANTHER" id="PTHR30307">
    <property type="entry name" value="S-ADENOSYLMETHIONINE:TRNA RIBOSYLTRANSFERASE-ISOMERASE"/>
    <property type="match status" value="1"/>
</dbReference>
<dbReference type="PANTHER" id="PTHR30307:SF0">
    <property type="entry name" value="S-ADENOSYLMETHIONINE:TRNA RIBOSYLTRANSFERASE-ISOMERASE"/>
    <property type="match status" value="1"/>
</dbReference>
<dbReference type="Pfam" id="PF02547">
    <property type="entry name" value="Queuosine_synth"/>
    <property type="match status" value="1"/>
</dbReference>
<dbReference type="SUPFAM" id="SSF111337">
    <property type="entry name" value="QueA-like"/>
    <property type="match status" value="1"/>
</dbReference>
<proteinExistence type="inferred from homology"/>
<name>QUEA_ECOUT</name>
<comment type="function">
    <text evidence="1">Transfers and isomerizes the ribose moiety from AdoMet to the 7-aminomethyl group of 7-deazaguanine (preQ1-tRNA) to give epoxyqueuosine (oQ-tRNA).</text>
</comment>
<comment type="catalytic activity">
    <reaction evidence="1">
        <text>7-aminomethyl-7-carbaguanosine(34) in tRNA + S-adenosyl-L-methionine = epoxyqueuosine(34) in tRNA + adenine + L-methionine + 2 H(+)</text>
        <dbReference type="Rhea" id="RHEA:32155"/>
        <dbReference type="Rhea" id="RHEA-COMP:10342"/>
        <dbReference type="Rhea" id="RHEA-COMP:18582"/>
        <dbReference type="ChEBI" id="CHEBI:15378"/>
        <dbReference type="ChEBI" id="CHEBI:16708"/>
        <dbReference type="ChEBI" id="CHEBI:57844"/>
        <dbReference type="ChEBI" id="CHEBI:59789"/>
        <dbReference type="ChEBI" id="CHEBI:82833"/>
        <dbReference type="ChEBI" id="CHEBI:194443"/>
        <dbReference type="EC" id="2.4.99.17"/>
    </reaction>
</comment>
<comment type="pathway">
    <text evidence="1">tRNA modification; tRNA-queuosine biosynthesis.</text>
</comment>
<comment type="subunit">
    <text evidence="1">Monomer.</text>
</comment>
<comment type="subcellular location">
    <subcellularLocation>
        <location evidence="1">Cytoplasm</location>
    </subcellularLocation>
</comment>
<comment type="similarity">
    <text evidence="1">Belongs to the QueA family.</text>
</comment>
<accession>Q1RFD6</accession>
<protein>
    <recommendedName>
        <fullName evidence="1">S-adenosylmethionine:tRNA ribosyltransferase-isomerase</fullName>
        <ecNumber evidence="1">2.4.99.17</ecNumber>
    </recommendedName>
    <alternativeName>
        <fullName evidence="1">Queuosine biosynthesis protein QueA</fullName>
    </alternativeName>
</protein>